<proteinExistence type="evidence at protein level"/>
<feature type="chain" id="PRO_0000447798" description="Magnetosome protein MmsF">
    <location>
        <begin position="1"/>
        <end position="107"/>
    </location>
</feature>
<feature type="topological domain" description="Cytoplasmic" evidence="3">
    <location>
        <begin position="1"/>
        <end position="13"/>
    </location>
</feature>
<feature type="transmembrane region" description="Helical" evidence="2">
    <location>
        <begin position="14"/>
        <end position="34"/>
    </location>
</feature>
<feature type="topological domain" description="Lumenal" evidence="8">
    <location>
        <begin position="35"/>
        <end position="46"/>
    </location>
</feature>
<feature type="transmembrane region" description="Helical" evidence="2">
    <location>
        <begin position="47"/>
        <end position="67"/>
    </location>
</feature>
<feature type="topological domain" description="Cytoplasmic" evidence="8">
    <location>
        <begin position="68"/>
        <end position="69"/>
    </location>
</feature>
<feature type="transmembrane region" description="Helical" evidence="2">
    <location>
        <begin position="70"/>
        <end position="90"/>
    </location>
</feature>
<feature type="topological domain" description="Lumenal" evidence="8">
    <location>
        <begin position="91"/>
        <end position="107"/>
    </location>
</feature>
<evidence type="ECO:0000250" key="1">
    <source>
        <dbReference type="UniProtKB" id="A4U547"/>
    </source>
</evidence>
<evidence type="ECO:0000255" key="2"/>
<evidence type="ECO:0000269" key="3">
    <source>
    </source>
</evidence>
<evidence type="ECO:0000269" key="4">
    <source>
    </source>
</evidence>
<evidence type="ECO:0000269" key="5">
    <source>
    </source>
</evidence>
<evidence type="ECO:0000269" key="6">
    <source>
    </source>
</evidence>
<evidence type="ECO:0000303" key="7">
    <source>
    </source>
</evidence>
<evidence type="ECO:0000305" key="8"/>
<evidence type="ECO:0000305" key="9">
    <source>
    </source>
</evidence>
<evidence type="ECO:0000305" key="10">
    <source>
    </source>
</evidence>
<gene>
    <name evidence="7" type="primary">mmsF</name>
    <name type="ordered locus">amb0957</name>
</gene>
<dbReference type="EMBL" id="AP007255">
    <property type="protein sequence ID" value="BAE49761.1"/>
    <property type="molecule type" value="Genomic_DNA"/>
</dbReference>
<dbReference type="RefSeq" id="WP_008620754.1">
    <property type="nucleotide sequence ID" value="NC_007626.1"/>
</dbReference>
<dbReference type="STRING" id="342108.amb0957"/>
<dbReference type="KEGG" id="mag:amb0957"/>
<dbReference type="HOGENOM" id="CLU_095018_0_1_5"/>
<dbReference type="OrthoDB" id="7357340at2"/>
<dbReference type="Proteomes" id="UP000007058">
    <property type="component" value="Chromosome"/>
</dbReference>
<dbReference type="GO" id="GO:0110146">
    <property type="term" value="C:magnetosome membrane"/>
    <property type="evidence" value="ECO:0000314"/>
    <property type="project" value="UniProtKB"/>
</dbReference>
<sequence length="107" mass="12039">MTEAILRSTLGARTTVMAALSYLSVLCFVPLLVDRDDEFVYFHAKQGLVIWMWGVLALFALHVPVLGKWIFGFSSMGVLVFSLLGLVSVVFQRAWKLPLISWVAHRI</sequence>
<organism>
    <name type="scientific">Paramagnetospirillum magneticum (strain ATCC 700264 / AMB-1)</name>
    <name type="common">Magnetospirillum magneticum</name>
    <dbReference type="NCBI Taxonomy" id="342108"/>
    <lineage>
        <taxon>Bacteria</taxon>
        <taxon>Pseudomonadati</taxon>
        <taxon>Pseudomonadota</taxon>
        <taxon>Alphaproteobacteria</taxon>
        <taxon>Rhodospirillales</taxon>
        <taxon>Magnetospirillaceae</taxon>
        <taxon>Paramagnetospirillum</taxon>
    </lineage>
</organism>
<reference key="1">
    <citation type="journal article" date="2005" name="DNA Res.">
        <title>Complete genome sequence of the facultative anaerobic magnetotactic bacterium Magnetospirillum sp. strain AMB-1.</title>
        <authorList>
            <person name="Matsunaga T."/>
            <person name="Okamura Y."/>
            <person name="Fukuda Y."/>
            <person name="Wahyudi A.T."/>
            <person name="Murase Y."/>
            <person name="Takeyama H."/>
        </authorList>
    </citation>
    <scope>NUCLEOTIDE SEQUENCE [LARGE SCALE GENOMIC DNA]</scope>
    <source>
        <strain>ATCC 700264 / AMB-1</strain>
    </source>
</reference>
<reference key="2">
    <citation type="journal article" date="2012" name="Mol. Microbiol.">
        <title>The magnetosome membrane protein, MmsF, is a major regulator of magnetite biomineralization in Magnetospirillum magneticum AMB-1.</title>
        <authorList>
            <person name="Murat D."/>
            <person name="Falahati V."/>
            <person name="Bertinetti L."/>
            <person name="Csencsits R."/>
            <person name="Koernig A."/>
            <person name="Downing K."/>
            <person name="Faivre D."/>
            <person name="Komeili A."/>
        </authorList>
    </citation>
    <scope>FUNCTION</scope>
    <scope>ACTIVITY REGULATION</scope>
    <scope>SUBCELLULAR LOCATION</scope>
    <scope>TOPOLOGY</scope>
    <scope>DISRUPTION PHENOTYPE</scope>
    <source>
        <strain>ATCC 700264 / AMB-1</strain>
    </source>
</reference>
<reference key="3">
    <citation type="journal article" date="2014" name="Proc. Natl. Acad. Sci. U.S.A.">
        <title>Self-assembled MmsF proteinosomes control magnetite nanoparticle formation in vitro.</title>
        <authorList>
            <person name="Rawlings A.E."/>
            <person name="Bramble J.P."/>
            <person name="Walker R."/>
            <person name="Bain J."/>
            <person name="Galloway J.M."/>
            <person name="Staniland S.S."/>
        </authorList>
    </citation>
    <scope>SELF-ASSEMBLY</scope>
    <scope>BIOTECHNOLOGY</scope>
    <source>
        <strain>ATCC 700264 / AMB-1</strain>
    </source>
</reference>
<reference key="4">
    <citation type="journal article" date="2016" name="J. Bacteriol.">
        <title>Comparative subcellular localization analysis of magnetosome proteins reveals a unique localization behavior of Mms6 protein onto magnetite crystals.</title>
        <authorList>
            <person name="Arakaki A."/>
            <person name="Kikuchi D."/>
            <person name="Tanaka M."/>
            <person name="Yamagishi A."/>
            <person name="Yoda T."/>
            <person name="Matsunaga T."/>
        </authorList>
    </citation>
    <scope>SUBCELLULAR LOCATION</scope>
    <source>
        <strain>ATCC 700264 / AMB-1</strain>
    </source>
</reference>
<reference key="5">
    <citation type="journal article" date="2016" name="MBio">
        <title>Dynamic Remodeling of the Magnetosome Membrane Is Triggered by the Initiation of Biomineralization.</title>
        <authorList>
            <person name="Cornejo E."/>
            <person name="Subramanian P."/>
            <person name="Li Z."/>
            <person name="Jensen G.J."/>
            <person name="Komeili A."/>
        </authorList>
    </citation>
    <scope>SUBCELLULAR LOCATION</scope>
    <scope>DISRUPTION PHENOTYPE</scope>
    <source>
        <strain>ATCC 700264 / AMB-1</strain>
    </source>
</reference>
<accession>Q2W8R4</accession>
<protein>
    <recommendedName>
        <fullName evidence="8">Magnetosome protein MmsF</fullName>
    </recommendedName>
</protein>
<comment type="function">
    <text evidence="1 3 4">Plays a major role in synthesis of cubooctahedral magnetite crystals by controlling crystal growth and morphology after nucleation (PubMed:22716969). Has a partially redundant function with MamF (By similarity). When overexpressed in E.coli the soluble protein self assembles into shells of about 36 nm. This protein mediates the formation of magnetite nanoparticles from a solution of Fe(2+) and Fe(3+) sulfate; the crystals are larger and lack alternative iron oxide/oxyhydroxide species seen in the protein's absence (PubMed:25349410).</text>
</comment>
<comment type="activity regulation">
    <text evidence="9">Its function may be negatively regulated by one of the MamGFDC proteins.</text>
</comment>
<comment type="subunit">
    <text evidence="10">May oligomerize.</text>
</comment>
<comment type="subcellular location">
    <subcellularLocation>
        <location evidence="3 5 6">Magnetosome membrane</location>
        <topology evidence="2 9">Multi-pass membrane protein</topology>
    </subcellularLocation>
    <text evidence="3 5 6">Tagged protein forms straight lines with a punctate pattern extending along most of the cell associated with its inner curvature, in the correct position to be associated with magnetosomes (PubMed:22716969, PubMed:26884433, PubMed:27481925). During magnetosome formation protein is first dispersed in cell inner membrane, the gradually forms foci which align and form lines as the magnetic response increases (PubMed:26884433).</text>
</comment>
<comment type="disruption phenotype">
    <text evidence="3 5">Single non-polar gene mutation and deletion of the probable mms6 operon (amb0955, mms6 and mmsF) leads to weak magnetic response and much smaller, elongated magnetite crystals (PubMed:22716969). Vesicles that are probably empty precursor magnetosomes are present and can grow to wild-type size (PubMed:26884433).</text>
</comment>
<comment type="biotechnology">
    <text evidence="4">May be useful for the manufacture of precision magnetite nanoparticles of uniform mineral type, and consistent morphology, with high magnetization. Addition to an Fe(2+) and Fe(3+) sulfate solution increases the quality of the magnetite crystals.</text>
</comment>
<comment type="miscellaneous">
    <text evidence="8">This bacteria makes up to 20 cubo-octahedral magnetosomes of about 45 nm in diameter which contain membrane-bound crystals of magnetite (Fe(3)O(4)).</text>
</comment>
<comment type="similarity">
    <text evidence="8">Belongs to the magnetosome MamF/MmsF protein family.</text>
</comment>
<keyword id="KW-0091">Biomineralization</keyword>
<keyword id="KW-1281">Magnetosome</keyword>
<keyword id="KW-0472">Membrane</keyword>
<keyword id="KW-0812">Transmembrane</keyword>
<keyword id="KW-1133">Transmembrane helix</keyword>
<name>MMSF_PARM1</name>